<keyword id="KW-1015">Disulfide bond</keyword>
<keyword id="KW-0574">Periplasm</keyword>
<keyword id="KW-0646">Protease inhibitor</keyword>
<keyword id="KW-0722">Serine protease inhibitor</keyword>
<keyword id="KW-0732">Signal</keyword>
<accession>Q31Z32</accession>
<sequence>MKTILPAVLFAAFATTSAWAAESVQPLEKIAPYPQAEKGMKRQVIQLTPQEDESTLKVELLIGQTLEVDCNLHRLGGKLESKTLEGWGYDYYVFDKVSSPVSTMMACPDGKKEKKFVTAYLGDAGMLRYNSKLPIVVYTPDNVDVKYRVWKAEEKIDNAEVR</sequence>
<dbReference type="EMBL" id="CP000036">
    <property type="protein sequence ID" value="ABB66676.1"/>
    <property type="molecule type" value="Genomic_DNA"/>
</dbReference>
<dbReference type="SMR" id="Q31Z32"/>
<dbReference type="MEROPS" id="I11.001"/>
<dbReference type="KEGG" id="sbo:SBO_2098"/>
<dbReference type="HOGENOM" id="CLU_111565_0_0_6"/>
<dbReference type="Proteomes" id="UP000007067">
    <property type="component" value="Chromosome"/>
</dbReference>
<dbReference type="GO" id="GO:0042597">
    <property type="term" value="C:periplasmic space"/>
    <property type="evidence" value="ECO:0007669"/>
    <property type="project" value="UniProtKB-SubCell"/>
</dbReference>
<dbReference type="GO" id="GO:0004867">
    <property type="term" value="F:serine-type endopeptidase inhibitor activity"/>
    <property type="evidence" value="ECO:0007669"/>
    <property type="project" value="UniProtKB-UniRule"/>
</dbReference>
<dbReference type="CDD" id="cd00242">
    <property type="entry name" value="Ecotin"/>
    <property type="match status" value="1"/>
</dbReference>
<dbReference type="FunFam" id="2.60.40.550:FF:000001">
    <property type="entry name" value="Ecotin"/>
    <property type="match status" value="1"/>
</dbReference>
<dbReference type="FunFam" id="4.10.1230.10:FF:000001">
    <property type="entry name" value="Ecotin"/>
    <property type="match status" value="1"/>
</dbReference>
<dbReference type="Gene3D" id="2.60.40.550">
    <property type="entry name" value="Ecotin"/>
    <property type="match status" value="1"/>
</dbReference>
<dbReference type="Gene3D" id="4.10.1230.10">
    <property type="entry name" value="Ecotin, trypsin inhibitor"/>
    <property type="match status" value="1"/>
</dbReference>
<dbReference type="HAMAP" id="MF_00706">
    <property type="entry name" value="Ecotin"/>
    <property type="match status" value="1"/>
</dbReference>
<dbReference type="InterPro" id="IPR027438">
    <property type="entry name" value="Ecotin_C"/>
</dbReference>
<dbReference type="InterPro" id="IPR036198">
    <property type="entry name" value="Ecotin_sf"/>
</dbReference>
<dbReference type="InterPro" id="IPR005658">
    <property type="entry name" value="Prot_inh_ecotin"/>
</dbReference>
<dbReference type="InterPro" id="IPR023084">
    <property type="entry name" value="Prot_inh_ecotin_gammaproteobac"/>
</dbReference>
<dbReference type="NCBIfam" id="NF002987">
    <property type="entry name" value="PRK03719.1"/>
    <property type="match status" value="1"/>
</dbReference>
<dbReference type="PANTHER" id="PTHR35890">
    <property type="match status" value="1"/>
</dbReference>
<dbReference type="PANTHER" id="PTHR35890:SF3">
    <property type="entry name" value="ECOTIN"/>
    <property type="match status" value="1"/>
</dbReference>
<dbReference type="Pfam" id="PF03974">
    <property type="entry name" value="Ecotin"/>
    <property type="match status" value="1"/>
</dbReference>
<dbReference type="PIRSF" id="PIRSF006865">
    <property type="entry name" value="Prot_inh_ecotin"/>
    <property type="match status" value="1"/>
</dbReference>
<dbReference type="SUPFAM" id="SSF49772">
    <property type="entry name" value="Ecotin, trypsin inhibitor"/>
    <property type="match status" value="1"/>
</dbReference>
<name>ECOT_SHIBS</name>
<organism>
    <name type="scientific">Shigella boydii serotype 4 (strain Sb227)</name>
    <dbReference type="NCBI Taxonomy" id="300268"/>
    <lineage>
        <taxon>Bacteria</taxon>
        <taxon>Pseudomonadati</taxon>
        <taxon>Pseudomonadota</taxon>
        <taxon>Gammaproteobacteria</taxon>
        <taxon>Enterobacterales</taxon>
        <taxon>Enterobacteriaceae</taxon>
        <taxon>Shigella</taxon>
    </lineage>
</organism>
<protein>
    <recommendedName>
        <fullName evidence="1">Ecotin</fullName>
    </recommendedName>
</protein>
<gene>
    <name evidence="1" type="primary">eco</name>
    <name type="ordered locus">SBO_2098</name>
</gene>
<evidence type="ECO:0000255" key="1">
    <source>
        <dbReference type="HAMAP-Rule" id="MF_00706"/>
    </source>
</evidence>
<comment type="function">
    <text evidence="1">General inhibitor of pancreatic serine proteases: inhibits chymotrypsin, trypsin, elastases, factor X, kallikrein as well as a variety of other proteases.</text>
</comment>
<comment type="subunit">
    <text evidence="1">Homodimer.</text>
</comment>
<comment type="subcellular location">
    <subcellularLocation>
        <location evidence="1">Periplasm</location>
    </subcellularLocation>
</comment>
<comment type="similarity">
    <text evidence="1">Belongs to the protease inhibitor I11 (ecotin) family.</text>
</comment>
<feature type="signal peptide" evidence="1">
    <location>
        <begin position="1"/>
        <end position="20"/>
    </location>
</feature>
<feature type="chain" id="PRO_0000225650" description="Ecotin">
    <location>
        <begin position="21"/>
        <end position="162"/>
    </location>
</feature>
<feature type="site" description="Reactive bond" evidence="1">
    <location>
        <begin position="104"/>
        <end position="105"/>
    </location>
</feature>
<feature type="disulfide bond" evidence="1">
    <location>
        <begin position="70"/>
        <end position="107"/>
    </location>
</feature>
<proteinExistence type="inferred from homology"/>
<reference key="1">
    <citation type="journal article" date="2005" name="Nucleic Acids Res.">
        <title>Genome dynamics and diversity of Shigella species, the etiologic agents of bacillary dysentery.</title>
        <authorList>
            <person name="Yang F."/>
            <person name="Yang J."/>
            <person name="Zhang X."/>
            <person name="Chen L."/>
            <person name="Jiang Y."/>
            <person name="Yan Y."/>
            <person name="Tang X."/>
            <person name="Wang J."/>
            <person name="Xiong Z."/>
            <person name="Dong J."/>
            <person name="Xue Y."/>
            <person name="Zhu Y."/>
            <person name="Xu X."/>
            <person name="Sun L."/>
            <person name="Chen S."/>
            <person name="Nie H."/>
            <person name="Peng J."/>
            <person name="Xu J."/>
            <person name="Wang Y."/>
            <person name="Yuan Z."/>
            <person name="Wen Y."/>
            <person name="Yao Z."/>
            <person name="Shen Y."/>
            <person name="Qiang B."/>
            <person name="Hou Y."/>
            <person name="Yu J."/>
            <person name="Jin Q."/>
        </authorList>
    </citation>
    <scope>NUCLEOTIDE SEQUENCE [LARGE SCALE GENOMIC DNA]</scope>
    <source>
        <strain>Sb227</strain>
    </source>
</reference>